<keyword id="KW-0175">Coiled coil</keyword>
<keyword id="KW-0539">Nucleus</keyword>
<keyword id="KW-1185">Reference proteome</keyword>
<keyword id="KW-0677">Repeat</keyword>
<keyword id="KW-0687">Ribonucleoprotein</keyword>
<keyword id="KW-0690">Ribosome biogenesis</keyword>
<keyword id="KW-0698">rRNA processing</keyword>
<accession>O60055</accession>
<gene>
    <name type="primary">utp20</name>
    <name type="ORF">SPBC56F2.04</name>
</gene>
<feature type="chain" id="PRO_0000316028" description="U3 small nucleolar RNA-associated protein 20">
    <location>
        <begin position="1"/>
        <end position="2493"/>
    </location>
</feature>
<feature type="repeat" description="HEAT 1">
    <location>
        <begin position="265"/>
        <end position="303"/>
    </location>
</feature>
<feature type="repeat" description="HEAT 2">
    <location>
        <begin position="402"/>
        <end position="439"/>
    </location>
</feature>
<feature type="repeat" description="HEAT 3">
    <location>
        <begin position="568"/>
        <end position="605"/>
    </location>
</feature>
<feature type="repeat" description="HEAT 4">
    <location>
        <begin position="913"/>
        <end position="957"/>
    </location>
</feature>
<feature type="repeat" description="HEAT 5">
    <location>
        <begin position="1145"/>
        <end position="1186"/>
    </location>
</feature>
<feature type="repeat" description="HEAT 6">
    <location>
        <begin position="1221"/>
        <end position="1262"/>
    </location>
</feature>
<feature type="repeat" description="HEAT 7">
    <location>
        <begin position="1400"/>
        <end position="1437"/>
    </location>
</feature>
<feature type="repeat" description="HEAT 8">
    <location>
        <begin position="1605"/>
        <end position="1645"/>
    </location>
</feature>
<feature type="repeat" description="HEAT 9">
    <location>
        <begin position="1647"/>
        <end position="1687"/>
    </location>
</feature>
<feature type="repeat" description="HEAT 10">
    <location>
        <begin position="1896"/>
        <end position="1933"/>
    </location>
</feature>
<feature type="repeat" description="HEAT 11">
    <location>
        <begin position="2082"/>
        <end position="2120"/>
    </location>
</feature>
<feature type="region of interest" description="Disordered" evidence="3">
    <location>
        <begin position="2463"/>
        <end position="2493"/>
    </location>
</feature>
<feature type="coiled-coil region" evidence="2">
    <location>
        <begin position="2393"/>
        <end position="2454"/>
    </location>
</feature>
<feature type="compositionally biased region" description="Basic residues" evidence="3">
    <location>
        <begin position="2463"/>
        <end position="2485"/>
    </location>
</feature>
<protein>
    <recommendedName>
        <fullName>U3 small nucleolar RNA-associated protein 20</fullName>
        <shortName>U3 snoRNA-associated protein 20</shortName>
    </recommendedName>
</protein>
<comment type="function">
    <text evidence="1">Involved in nucleolar processing of pre-18S ribosomal RNA and ribosome assembly.</text>
</comment>
<comment type="subunit">
    <text evidence="1">Interacts with snoRNA U3. Component of the ribosomal small subunit (SSU) processome composed of at least 40 protein subunits and snoRNA U3.</text>
</comment>
<comment type="subcellular location">
    <subcellularLocation>
        <location evidence="4">Nucleus</location>
        <location evidence="4">Nucleolus</location>
    </subcellularLocation>
</comment>
<comment type="similarity">
    <text evidence="5">Belongs to the UTP20 family.</text>
</comment>
<name>UTP20_SCHPO</name>
<organism>
    <name type="scientific">Schizosaccharomyces pombe (strain 972 / ATCC 24843)</name>
    <name type="common">Fission yeast</name>
    <dbReference type="NCBI Taxonomy" id="284812"/>
    <lineage>
        <taxon>Eukaryota</taxon>
        <taxon>Fungi</taxon>
        <taxon>Dikarya</taxon>
        <taxon>Ascomycota</taxon>
        <taxon>Taphrinomycotina</taxon>
        <taxon>Schizosaccharomycetes</taxon>
        <taxon>Schizosaccharomycetales</taxon>
        <taxon>Schizosaccharomycetaceae</taxon>
        <taxon>Schizosaccharomyces</taxon>
    </lineage>
</organism>
<reference key="1">
    <citation type="journal article" date="2002" name="Nature">
        <title>The genome sequence of Schizosaccharomyces pombe.</title>
        <authorList>
            <person name="Wood V."/>
            <person name="Gwilliam R."/>
            <person name="Rajandream M.A."/>
            <person name="Lyne M.H."/>
            <person name="Lyne R."/>
            <person name="Stewart A."/>
            <person name="Sgouros J.G."/>
            <person name="Peat N."/>
            <person name="Hayles J."/>
            <person name="Baker S.G."/>
            <person name="Basham D."/>
            <person name="Bowman S."/>
            <person name="Brooks K."/>
            <person name="Brown D."/>
            <person name="Brown S."/>
            <person name="Chillingworth T."/>
            <person name="Churcher C.M."/>
            <person name="Collins M."/>
            <person name="Connor R."/>
            <person name="Cronin A."/>
            <person name="Davis P."/>
            <person name="Feltwell T."/>
            <person name="Fraser A."/>
            <person name="Gentles S."/>
            <person name="Goble A."/>
            <person name="Hamlin N."/>
            <person name="Harris D.E."/>
            <person name="Hidalgo J."/>
            <person name="Hodgson G."/>
            <person name="Holroyd S."/>
            <person name="Hornsby T."/>
            <person name="Howarth S."/>
            <person name="Huckle E.J."/>
            <person name="Hunt S."/>
            <person name="Jagels K."/>
            <person name="James K.D."/>
            <person name="Jones L."/>
            <person name="Jones M."/>
            <person name="Leather S."/>
            <person name="McDonald S."/>
            <person name="McLean J."/>
            <person name="Mooney P."/>
            <person name="Moule S."/>
            <person name="Mungall K.L."/>
            <person name="Murphy L.D."/>
            <person name="Niblett D."/>
            <person name="Odell C."/>
            <person name="Oliver K."/>
            <person name="O'Neil S."/>
            <person name="Pearson D."/>
            <person name="Quail M.A."/>
            <person name="Rabbinowitsch E."/>
            <person name="Rutherford K.M."/>
            <person name="Rutter S."/>
            <person name="Saunders D."/>
            <person name="Seeger K."/>
            <person name="Sharp S."/>
            <person name="Skelton J."/>
            <person name="Simmonds M.N."/>
            <person name="Squares R."/>
            <person name="Squares S."/>
            <person name="Stevens K."/>
            <person name="Taylor K."/>
            <person name="Taylor R.G."/>
            <person name="Tivey A."/>
            <person name="Walsh S.V."/>
            <person name="Warren T."/>
            <person name="Whitehead S."/>
            <person name="Woodward J.R."/>
            <person name="Volckaert G."/>
            <person name="Aert R."/>
            <person name="Robben J."/>
            <person name="Grymonprez B."/>
            <person name="Weltjens I."/>
            <person name="Vanstreels E."/>
            <person name="Rieger M."/>
            <person name="Schaefer M."/>
            <person name="Mueller-Auer S."/>
            <person name="Gabel C."/>
            <person name="Fuchs M."/>
            <person name="Duesterhoeft A."/>
            <person name="Fritzc C."/>
            <person name="Holzer E."/>
            <person name="Moestl D."/>
            <person name="Hilbert H."/>
            <person name="Borzym K."/>
            <person name="Langer I."/>
            <person name="Beck A."/>
            <person name="Lehrach H."/>
            <person name="Reinhardt R."/>
            <person name="Pohl T.M."/>
            <person name="Eger P."/>
            <person name="Zimmermann W."/>
            <person name="Wedler H."/>
            <person name="Wambutt R."/>
            <person name="Purnelle B."/>
            <person name="Goffeau A."/>
            <person name="Cadieu E."/>
            <person name="Dreano S."/>
            <person name="Gloux S."/>
            <person name="Lelaure V."/>
            <person name="Mottier S."/>
            <person name="Galibert F."/>
            <person name="Aves S.J."/>
            <person name="Xiang Z."/>
            <person name="Hunt C."/>
            <person name="Moore K."/>
            <person name="Hurst S.M."/>
            <person name="Lucas M."/>
            <person name="Rochet M."/>
            <person name="Gaillardin C."/>
            <person name="Tallada V.A."/>
            <person name="Garzon A."/>
            <person name="Thode G."/>
            <person name="Daga R.R."/>
            <person name="Cruzado L."/>
            <person name="Jimenez J."/>
            <person name="Sanchez M."/>
            <person name="del Rey F."/>
            <person name="Benito J."/>
            <person name="Dominguez A."/>
            <person name="Revuelta J.L."/>
            <person name="Moreno S."/>
            <person name="Armstrong J."/>
            <person name="Forsburg S.L."/>
            <person name="Cerutti L."/>
            <person name="Lowe T."/>
            <person name="McCombie W.R."/>
            <person name="Paulsen I."/>
            <person name="Potashkin J."/>
            <person name="Shpakovski G.V."/>
            <person name="Ussery D."/>
            <person name="Barrell B.G."/>
            <person name="Nurse P."/>
        </authorList>
    </citation>
    <scope>NUCLEOTIDE SEQUENCE [LARGE SCALE GENOMIC DNA]</scope>
    <source>
        <strain>972 / ATCC 24843</strain>
    </source>
</reference>
<reference key="2">
    <citation type="journal article" date="2006" name="Nat. Biotechnol.">
        <title>ORFeome cloning and global analysis of protein localization in the fission yeast Schizosaccharomyces pombe.</title>
        <authorList>
            <person name="Matsuyama A."/>
            <person name="Arai R."/>
            <person name="Yashiroda Y."/>
            <person name="Shirai A."/>
            <person name="Kamata A."/>
            <person name="Sekido S."/>
            <person name="Kobayashi Y."/>
            <person name="Hashimoto A."/>
            <person name="Hamamoto M."/>
            <person name="Hiraoka Y."/>
            <person name="Horinouchi S."/>
            <person name="Yoshida M."/>
        </authorList>
    </citation>
    <scope>SUBCELLULAR LOCATION [LARGE SCALE ANALYSIS]</scope>
</reference>
<proteinExistence type="inferred from homology"/>
<sequence>MKAAAQSNSKNYVFLPFSKRVENLKIDVAHKIPRAADLEDEDVESYFISCLRKWEDLNLSTHYVNFLRSVTPYSQSLPQIVYHQKTIFDLIVQYAREGDSLSLQPILELLTQFARDLALEFASYIDQTLELLCILVQNNELEVVDWSFHAAAYLFKYLRKILAPRLIHTYDILSPLLGKEKQKSHVTRFTAEALSFLCKTVSYENAIEFTGHVLLDLNDHYTPQYHEGVVILFSRIIQGVDTSIHFKGKAFFEILLRSEIYTLPRSKSVIIPVLISTIHHCTSDSFNELEKLIISKITGEPLLYINLFKATLVTRKGSRVSDYPSFFKAYLQIPNLVSWENIESDLSVLIFEISALLFVYPQISDLMPHTVRIISFLQQGPLHLFFSFVDVVKQLNMQRYDSFIKPSLPKFISSLVSDESQKSLAILESVLDNSVPVPVDVASVSLNHFVYCIERLQIVSPSYEDIISLWSSLMIIISSSLGSDEIYKACLLFLRKLEDVSSESVLLGDICGIVLHLLQRKVSRLFLDSSYYKPILDSLLGVFGFLADSKVFLESIRPFFGTSYDFCSSYTSLMDRLINNLSRGLTSLRAASIDLIIALCKSLQKNEVLQSLSLVKKLSELPFDPSTSRDASVLLRNLSAKSSALEKDTRRVVLHALLGLTITRFTPLWPDLSRTAASIVTKEVEDEFLAIIYSWLSLPSPPSGLLGPTDTAVFVKPDLSLEKLPTLEINTFNCPAISYFETSFDECFSKFASSDNYIIGNLLKTNQEDLSNLPTFRSQALRVLNELPEIASRNINVLDNYLFSLQHGFDLNTEWARPDVYLLLGLYSKFTGIKEFVNRDARKEFFLWALTINDPKVQKLVLDIILLYSEEAITTYEENLRNLLDDKKCRDELITFLFVDYADSKIQDIHRPLLMPVVISILYGKMVSKGYGGQKNQAARRSTILSALGNMQVEDLQILVDIMLRPYNGLEVKLNANNNLEIDTGNIPSLTLRRQIGFLTMTEELLLQISSKLSSVAPKILNAVLYNLVVSDDQISSQEAFENFEVKMAYTVRQLSLKVFLLFLKSCSDVDFKPYNVFIYTAFVVPRLDRFADENTQSVSNLMKIFRCWFENEAYLDSVLEFSSHILTALLNTASHTAVKLPVLLYILDTLNLVITHLQSEESESQLREKILANLVMPNITLIFASLSNILKNPQFCNNNRVMDGSVQALSAVSEYMSLDIDSSPLLNLLVSFLRKPNRLVPSNVKSNILVLLCKLLPTNTKWLHASISQTNDFDTIMHLYTSMVDIKARQHLNDLLKIYSTIDDNLIFSSVFVEEINSISKKRLDEPDFERRLSAFTSFNEKHFSLISDLAWLPVLYNFFFYVQDAEELAIRASASLGIKRFIESITMNDASNQFKIDVFVKFIFPFIKNQMKNKNELIRQEFIGLLSYSIKSLTMVDAISDMQPLLYEGDEEANFFNNILHIQLHRRKRAMKRLVNVCAIGVIRSGNISQIFLPLLENFCLGNDTVQTLLDESVITIGEIIKWAHWNQYQAILKRYVSLLKNNAIDQKVVVRLITAVVSALRPLDDAVASYTNSEMNIEQFDGQKKKCVLASSLPSEERFTEVLTNDFFPTLMLYLHIRDESTVTLRVAIALSIVQLVALLPEEEIVLRLTPVLIDTCHILRSRSLESRDATRKALAAISKFLGPKYFSFIISQLQTSLKRGYQLHVLGYTVHYLLLAIEDVYPYGSIDYCMDSLAQIFVDEIFGEVGVEKDSEDYKSNVKEIKGNKSYDSYEIVARISSFDSLSTLLRPVKNVLFETNVPKSLRKVDELCRRLSLGIVANKQSASQSSLIFCYNVYEFVVKEKETVAALKQQENDGYRSAPNFFLENSKKLIRFTFDVLRGVSNKHKELLTARNMAAFVPLIGESLLSSSEEVQISALRFLVLLLPLKIDQVFSGSSVFTSQAVKYIQNSPSTNTELCQASFKFLASILPYENVKIKESTINYLLERVGTDIQEPDRQGVMFSLVRAVIARKIMTPELYKIIDLIRDMMVTNHTKSTRQTCRHLYYSFLLDYPQGKTRLSKQISFILKNLEYEFAPGRESVMELLHLILNNFSDALLKEYHQGIFIALVMVLANDSEPHCREMSAELIKLVYQRADNENFNLIRQLLSHWTSVEKAGKNLVRVSMQLFGLLFETFGFERMEEVHLFTKVFERVLSTTISHPEEATNEWELNYFGLQSWLKLVLADPKKSCEKEFSKIWESMRYLILFKHAWVRLSVSRLFGHFFAIIGDSNFGKLSLGIDGVVFSLDFVTQISNALQAQLRSPVLSEELGMQVAKNLIFLTRWFNSIRSSDDSPFLEIFRRMRKTLKKQTIEEYSINKKYLMQWFASVIHVFSGEELQPVLSEIIAALYRYTELQEAERKSQQELADLVTESLQVLQEKVGATVFARAYQEVRNAAIEVRRERREKRAIEQVVAPEVASRKKIRKNERKRENRKQKTNHHRMVNSIFKNR</sequence>
<dbReference type="EMBL" id="CU329671">
    <property type="protein sequence ID" value="CAA18883.1"/>
    <property type="molecule type" value="Genomic_DNA"/>
</dbReference>
<dbReference type="PIR" id="T40540">
    <property type="entry name" value="T40540"/>
</dbReference>
<dbReference type="RefSeq" id="NP_596713.1">
    <property type="nucleotide sequence ID" value="NM_001022638.2"/>
</dbReference>
<dbReference type="SMR" id="O60055"/>
<dbReference type="BioGRID" id="277359">
    <property type="interactions" value="3"/>
</dbReference>
<dbReference type="FunCoup" id="O60055">
    <property type="interactions" value="627"/>
</dbReference>
<dbReference type="STRING" id="284812.O60055"/>
<dbReference type="iPTMnet" id="O60055"/>
<dbReference type="PaxDb" id="4896-SPBC56F2.04.1"/>
<dbReference type="EnsemblFungi" id="SPBC56F2.04.1">
    <property type="protein sequence ID" value="SPBC56F2.04.1:pep"/>
    <property type="gene ID" value="SPBC56F2.04"/>
</dbReference>
<dbReference type="GeneID" id="2540842"/>
<dbReference type="KEGG" id="spo:2540842"/>
<dbReference type="PomBase" id="SPBC56F2.04">
    <property type="gene designation" value="utp20"/>
</dbReference>
<dbReference type="VEuPathDB" id="FungiDB:SPBC56F2.04"/>
<dbReference type="eggNOG" id="KOG1823">
    <property type="taxonomic scope" value="Eukaryota"/>
</dbReference>
<dbReference type="HOGENOM" id="CLU_000327_0_0_1"/>
<dbReference type="InParanoid" id="O60055"/>
<dbReference type="OMA" id="EGLMAMF"/>
<dbReference type="PhylomeDB" id="O60055"/>
<dbReference type="Reactome" id="R-SPO-6791226">
    <property type="pathway name" value="Major pathway of rRNA processing in the nucleolus and cytosol"/>
</dbReference>
<dbReference type="PRO" id="PR:O60055"/>
<dbReference type="Proteomes" id="UP000002485">
    <property type="component" value="Chromosome II"/>
</dbReference>
<dbReference type="GO" id="GO:0030686">
    <property type="term" value="C:90S preribosome"/>
    <property type="evidence" value="ECO:0000318"/>
    <property type="project" value="GO_Central"/>
</dbReference>
<dbReference type="GO" id="GO:0005730">
    <property type="term" value="C:nucleolus"/>
    <property type="evidence" value="ECO:0007005"/>
    <property type="project" value="PomBase"/>
</dbReference>
<dbReference type="GO" id="GO:0005634">
    <property type="term" value="C:nucleus"/>
    <property type="evidence" value="ECO:0007005"/>
    <property type="project" value="PomBase"/>
</dbReference>
<dbReference type="GO" id="GO:0030688">
    <property type="term" value="C:preribosome, small subunit precursor"/>
    <property type="evidence" value="ECO:0000266"/>
    <property type="project" value="PomBase"/>
</dbReference>
<dbReference type="GO" id="GO:0032040">
    <property type="term" value="C:small-subunit processome"/>
    <property type="evidence" value="ECO:0000318"/>
    <property type="project" value="GO_Central"/>
</dbReference>
<dbReference type="GO" id="GO:0030515">
    <property type="term" value="F:snoRNA binding"/>
    <property type="evidence" value="ECO:0000266"/>
    <property type="project" value="PomBase"/>
</dbReference>
<dbReference type="GO" id="GO:0006364">
    <property type="term" value="P:rRNA processing"/>
    <property type="evidence" value="ECO:0000266"/>
    <property type="project" value="PomBase"/>
</dbReference>
<dbReference type="InterPro" id="IPR016024">
    <property type="entry name" value="ARM-type_fold"/>
</dbReference>
<dbReference type="InterPro" id="IPR052575">
    <property type="entry name" value="SSU_processome_comp_20"/>
</dbReference>
<dbReference type="InterPro" id="IPR046523">
    <property type="entry name" value="UTP20_C"/>
</dbReference>
<dbReference type="InterPro" id="IPR011430">
    <property type="entry name" value="UTP20_N"/>
</dbReference>
<dbReference type="PANTHER" id="PTHR17695">
    <property type="entry name" value="SMALL SUBUNIT PROCESSOME COMPONENT 20 HOMOLOG"/>
    <property type="match status" value="1"/>
</dbReference>
<dbReference type="PANTHER" id="PTHR17695:SF11">
    <property type="entry name" value="SMALL SUBUNIT PROCESSOME COMPONENT 20 HOMOLOG"/>
    <property type="match status" value="1"/>
</dbReference>
<dbReference type="Pfam" id="PF20416">
    <property type="entry name" value="UTP20"/>
    <property type="match status" value="1"/>
</dbReference>
<dbReference type="Pfam" id="PF23099">
    <property type="entry name" value="UTP20_C"/>
    <property type="match status" value="1"/>
</dbReference>
<dbReference type="Pfam" id="PF07539">
    <property type="entry name" value="UTP20_N"/>
    <property type="match status" value="1"/>
</dbReference>
<dbReference type="SUPFAM" id="SSF48371">
    <property type="entry name" value="ARM repeat"/>
    <property type="match status" value="3"/>
</dbReference>
<evidence type="ECO:0000250" key="1"/>
<evidence type="ECO:0000255" key="2"/>
<evidence type="ECO:0000256" key="3">
    <source>
        <dbReference type="SAM" id="MobiDB-lite"/>
    </source>
</evidence>
<evidence type="ECO:0000269" key="4">
    <source>
    </source>
</evidence>
<evidence type="ECO:0000305" key="5"/>